<proteinExistence type="inferred from homology"/>
<protein>
    <recommendedName>
        <fullName evidence="1">Phosphoheptose isomerase</fullName>
        <ecNumber evidence="1">5.3.1.28</ecNumber>
    </recommendedName>
    <alternativeName>
        <fullName evidence="1">Sedoheptulose 7-phosphate isomerase</fullName>
    </alternativeName>
</protein>
<organism>
    <name type="scientific">Leptospira interrogans serogroup Icterohaemorrhagiae serovar copenhageni (strain Fiocruz L1-130)</name>
    <dbReference type="NCBI Taxonomy" id="267671"/>
    <lineage>
        <taxon>Bacteria</taxon>
        <taxon>Pseudomonadati</taxon>
        <taxon>Spirochaetota</taxon>
        <taxon>Spirochaetia</taxon>
        <taxon>Leptospirales</taxon>
        <taxon>Leptospiraceae</taxon>
        <taxon>Leptospira</taxon>
    </lineage>
</organism>
<keyword id="KW-0119">Carbohydrate metabolism</keyword>
<keyword id="KW-0963">Cytoplasm</keyword>
<keyword id="KW-0413">Isomerase</keyword>
<keyword id="KW-0479">Metal-binding</keyword>
<keyword id="KW-0862">Zinc</keyword>
<gene>
    <name evidence="1" type="primary">gmhA</name>
    <name type="ordered locus">LIC_11825</name>
</gene>
<name>GMHA_LEPIC</name>
<evidence type="ECO:0000255" key="1">
    <source>
        <dbReference type="HAMAP-Rule" id="MF_00067"/>
    </source>
</evidence>
<feature type="chain" id="PRO_0000136534" description="Phosphoheptose isomerase">
    <location>
        <begin position="1"/>
        <end position="195"/>
    </location>
</feature>
<feature type="domain" description="SIS" evidence="1">
    <location>
        <begin position="35"/>
        <end position="195"/>
    </location>
</feature>
<feature type="binding site" evidence="1">
    <location>
        <begin position="51"/>
        <end position="53"/>
    </location>
    <ligand>
        <name>substrate</name>
    </ligand>
</feature>
<feature type="binding site" evidence="1">
    <location>
        <position position="60"/>
    </location>
    <ligand>
        <name>Zn(2+)</name>
        <dbReference type="ChEBI" id="CHEBI:29105"/>
    </ligand>
</feature>
<feature type="binding site" evidence="1">
    <location>
        <position position="64"/>
    </location>
    <ligand>
        <name>substrate</name>
    </ligand>
</feature>
<feature type="binding site" evidence="1">
    <location>
        <position position="64"/>
    </location>
    <ligand>
        <name>Zn(2+)</name>
        <dbReference type="ChEBI" id="CHEBI:29105"/>
    </ligand>
</feature>
<feature type="binding site" evidence="1">
    <location>
        <begin position="95"/>
        <end position="96"/>
    </location>
    <ligand>
        <name>substrate</name>
    </ligand>
</feature>
<feature type="binding site" evidence="1">
    <location>
        <begin position="121"/>
        <end position="123"/>
    </location>
    <ligand>
        <name>substrate</name>
    </ligand>
</feature>
<feature type="binding site" evidence="1">
    <location>
        <position position="126"/>
    </location>
    <ligand>
        <name>substrate</name>
    </ligand>
</feature>
<feature type="binding site" evidence="1">
    <location>
        <position position="173"/>
    </location>
    <ligand>
        <name>substrate</name>
    </ligand>
</feature>
<feature type="binding site" evidence="1">
    <location>
        <position position="173"/>
    </location>
    <ligand>
        <name>Zn(2+)</name>
        <dbReference type="ChEBI" id="CHEBI:29105"/>
    </ligand>
</feature>
<feature type="binding site" evidence="1">
    <location>
        <position position="181"/>
    </location>
    <ligand>
        <name>Zn(2+)</name>
        <dbReference type="ChEBI" id="CHEBI:29105"/>
    </ligand>
</feature>
<dbReference type="EC" id="5.3.1.28" evidence="1"/>
<dbReference type="EMBL" id="AE016823">
    <property type="protein sequence ID" value="AAS70413.1"/>
    <property type="molecule type" value="Genomic_DNA"/>
</dbReference>
<dbReference type="RefSeq" id="WP_000351733.1">
    <property type="nucleotide sequence ID" value="NC_005823.1"/>
</dbReference>
<dbReference type="SMR" id="Q72RC1"/>
<dbReference type="GeneID" id="61141721"/>
<dbReference type="KEGG" id="lic:LIC_11825"/>
<dbReference type="HOGENOM" id="CLU_080999_4_0_12"/>
<dbReference type="BRENDA" id="5.3.1.28">
    <property type="organism ID" value="2986"/>
</dbReference>
<dbReference type="UniPathway" id="UPA00041">
    <property type="reaction ID" value="UER00436"/>
</dbReference>
<dbReference type="Proteomes" id="UP000007037">
    <property type="component" value="Chromosome I"/>
</dbReference>
<dbReference type="GO" id="GO:0005737">
    <property type="term" value="C:cytoplasm"/>
    <property type="evidence" value="ECO:0007669"/>
    <property type="project" value="UniProtKB-SubCell"/>
</dbReference>
<dbReference type="GO" id="GO:0097367">
    <property type="term" value="F:carbohydrate derivative binding"/>
    <property type="evidence" value="ECO:0007669"/>
    <property type="project" value="InterPro"/>
</dbReference>
<dbReference type="GO" id="GO:0008968">
    <property type="term" value="F:D-sedoheptulose 7-phosphate isomerase activity"/>
    <property type="evidence" value="ECO:0007669"/>
    <property type="project" value="UniProtKB-UniRule"/>
</dbReference>
<dbReference type="GO" id="GO:0008270">
    <property type="term" value="F:zinc ion binding"/>
    <property type="evidence" value="ECO:0007669"/>
    <property type="project" value="UniProtKB-UniRule"/>
</dbReference>
<dbReference type="GO" id="GO:0005975">
    <property type="term" value="P:carbohydrate metabolic process"/>
    <property type="evidence" value="ECO:0007669"/>
    <property type="project" value="UniProtKB-UniRule"/>
</dbReference>
<dbReference type="GO" id="GO:2001061">
    <property type="term" value="P:D-glycero-D-manno-heptose 7-phosphate biosynthetic process"/>
    <property type="evidence" value="ECO:0007669"/>
    <property type="project" value="UniProtKB-UniPathway"/>
</dbReference>
<dbReference type="CDD" id="cd05006">
    <property type="entry name" value="SIS_GmhA"/>
    <property type="match status" value="1"/>
</dbReference>
<dbReference type="Gene3D" id="3.40.50.10490">
    <property type="entry name" value="Glucose-6-phosphate isomerase like protein, domain 1"/>
    <property type="match status" value="1"/>
</dbReference>
<dbReference type="HAMAP" id="MF_00067">
    <property type="entry name" value="GmhA"/>
    <property type="match status" value="1"/>
</dbReference>
<dbReference type="InterPro" id="IPR035461">
    <property type="entry name" value="GmhA/DiaA"/>
</dbReference>
<dbReference type="InterPro" id="IPR004515">
    <property type="entry name" value="Phosphoheptose_Isoase"/>
</dbReference>
<dbReference type="InterPro" id="IPR001347">
    <property type="entry name" value="SIS_dom"/>
</dbReference>
<dbReference type="InterPro" id="IPR046348">
    <property type="entry name" value="SIS_dom_sf"/>
</dbReference>
<dbReference type="InterPro" id="IPR050099">
    <property type="entry name" value="SIS_GmhA/DiaA_subfam"/>
</dbReference>
<dbReference type="NCBIfam" id="TIGR00441">
    <property type="entry name" value="gmhA"/>
    <property type="match status" value="1"/>
</dbReference>
<dbReference type="PANTHER" id="PTHR30390:SF6">
    <property type="entry name" value="DNAA INITIATOR-ASSOCIATING PROTEIN DIAA"/>
    <property type="match status" value="1"/>
</dbReference>
<dbReference type="PANTHER" id="PTHR30390">
    <property type="entry name" value="SEDOHEPTULOSE 7-PHOSPHATE ISOMERASE / DNAA INITIATOR-ASSOCIATING FACTOR FOR REPLICATION INITIATION"/>
    <property type="match status" value="1"/>
</dbReference>
<dbReference type="Pfam" id="PF13580">
    <property type="entry name" value="SIS_2"/>
    <property type="match status" value="1"/>
</dbReference>
<dbReference type="SUPFAM" id="SSF53697">
    <property type="entry name" value="SIS domain"/>
    <property type="match status" value="1"/>
</dbReference>
<dbReference type="PROSITE" id="PS51464">
    <property type="entry name" value="SIS"/>
    <property type="match status" value="1"/>
</dbReference>
<reference key="1">
    <citation type="journal article" date="2004" name="J. Bacteriol.">
        <title>Comparative genomics of two Leptospira interrogans serovars reveals novel insights into physiology and pathogenesis.</title>
        <authorList>
            <person name="Nascimento A.L.T.O."/>
            <person name="Ko A.I."/>
            <person name="Martins E.A.L."/>
            <person name="Monteiro-Vitorello C.B."/>
            <person name="Ho P.L."/>
            <person name="Haake D.A."/>
            <person name="Verjovski-Almeida S."/>
            <person name="Hartskeerl R.A."/>
            <person name="Marques M.V."/>
            <person name="Oliveira M.C."/>
            <person name="Menck C.F.M."/>
            <person name="Leite L.C.C."/>
            <person name="Carrer H."/>
            <person name="Coutinho L.L."/>
            <person name="Degrave W.M."/>
            <person name="Dellagostin O.A."/>
            <person name="El-Dorry H."/>
            <person name="Ferro E.S."/>
            <person name="Ferro M.I.T."/>
            <person name="Furlan L.R."/>
            <person name="Gamberini M."/>
            <person name="Giglioti E.A."/>
            <person name="Goes-Neto A."/>
            <person name="Goldman G.H."/>
            <person name="Goldman M.H.S."/>
            <person name="Harakava R."/>
            <person name="Jeronimo S.M.B."/>
            <person name="Junqueira-de-Azevedo I.L.M."/>
            <person name="Kimura E.T."/>
            <person name="Kuramae E.E."/>
            <person name="Lemos E.G.M."/>
            <person name="Lemos M.V.F."/>
            <person name="Marino C.L."/>
            <person name="Nunes L.R."/>
            <person name="de Oliveira R.C."/>
            <person name="Pereira G.G."/>
            <person name="Reis M.S."/>
            <person name="Schriefer A."/>
            <person name="Siqueira W.J."/>
            <person name="Sommer P."/>
            <person name="Tsai S.M."/>
            <person name="Simpson A.J.G."/>
            <person name="Ferro J.A."/>
            <person name="Camargo L.E.A."/>
            <person name="Kitajima J.P."/>
            <person name="Setubal J.C."/>
            <person name="Van Sluys M.A."/>
        </authorList>
    </citation>
    <scope>NUCLEOTIDE SEQUENCE [LARGE SCALE GENOMIC DNA]</scope>
    <source>
        <strain>Fiocruz L1-130</strain>
    </source>
</reference>
<sequence>MDIKEIALGQIRDSIATKQKCIDSILEDIIKAGEIVSKILQAGNTIFLCGNGGSSCDASHIAAELVVRYKSGNERKALPALSLSADSAVLTACSNDYGYEEIFSRQIEAFGRKGDLLIGLSTSGNSKNVLLALEKAKTRGVKTISLLGGDGGKMKNLSDLDVIVPSNVTARIQESHILIGHIICSIVEYNLFKME</sequence>
<comment type="function">
    <text evidence="1">Catalyzes the isomerization of sedoheptulose 7-phosphate in D-glycero-D-manno-heptose 7-phosphate.</text>
</comment>
<comment type="catalytic activity">
    <reaction evidence="1">
        <text>2 D-sedoheptulose 7-phosphate = D-glycero-alpha-D-manno-heptose 7-phosphate + D-glycero-beta-D-manno-heptose 7-phosphate</text>
        <dbReference type="Rhea" id="RHEA:27489"/>
        <dbReference type="ChEBI" id="CHEBI:57483"/>
        <dbReference type="ChEBI" id="CHEBI:60203"/>
        <dbReference type="ChEBI" id="CHEBI:60204"/>
        <dbReference type="EC" id="5.3.1.28"/>
    </reaction>
</comment>
<comment type="cofactor">
    <cofactor evidence="1">
        <name>Zn(2+)</name>
        <dbReference type="ChEBI" id="CHEBI:29105"/>
    </cofactor>
    <text evidence="1">Binds 1 zinc ion per subunit.</text>
</comment>
<comment type="pathway">
    <text evidence="1">Carbohydrate biosynthesis; D-glycero-D-manno-heptose 7-phosphate biosynthesis; D-glycero-alpha-D-manno-heptose 7-phosphate and D-glycero-beta-D-manno-heptose 7-phosphate from sedoheptulose 7-phosphate: step 1/1.</text>
</comment>
<comment type="subcellular location">
    <subcellularLocation>
        <location evidence="1">Cytoplasm</location>
    </subcellularLocation>
</comment>
<comment type="miscellaneous">
    <text evidence="1">The reaction produces a racemic mixture of D-glycero-alpha-D-manno-heptose 7-phosphate and D-glycero-beta-D-manno-heptose 7-phosphate.</text>
</comment>
<comment type="similarity">
    <text evidence="1">Belongs to the SIS family. GmhA subfamily.</text>
</comment>
<accession>Q72RC1</accession>